<feature type="chain" id="PRO_0000454028" description="Xylan O-acetyltransferase 4">
    <location>
        <begin position="1"/>
        <end position="476"/>
    </location>
</feature>
<feature type="topological domain" description="Cytoplasmic" evidence="9">
    <location>
        <begin position="1"/>
        <end position="63"/>
    </location>
</feature>
<feature type="transmembrane region" description="Helical; Signal-anchor for type II membrane protein" evidence="3">
    <location>
        <begin position="64"/>
        <end position="80"/>
    </location>
</feature>
<feature type="topological domain" description="Lumenal" evidence="9">
    <location>
        <begin position="81"/>
        <end position="476"/>
    </location>
</feature>
<feature type="region of interest" description="Disordered" evidence="5">
    <location>
        <begin position="1"/>
        <end position="37"/>
    </location>
</feature>
<feature type="short sequence motif" description="GDS motif" evidence="10">
    <location>
        <begin position="191"/>
        <end position="193"/>
    </location>
</feature>
<feature type="short sequence motif" description="DXXH motif" evidence="10">
    <location>
        <begin position="439"/>
        <end position="442"/>
    </location>
</feature>
<feature type="compositionally biased region" description="Low complexity" evidence="5">
    <location>
        <begin position="8"/>
        <end position="18"/>
    </location>
</feature>
<feature type="compositionally biased region" description="Pro residues" evidence="5">
    <location>
        <begin position="19"/>
        <end position="31"/>
    </location>
</feature>
<feature type="active site" description="Nucleophile" evidence="2">
    <location>
        <position position="193"/>
    </location>
</feature>
<feature type="active site" description="Proton donor" evidence="2">
    <location>
        <position position="439"/>
    </location>
</feature>
<feature type="active site" description="Proton acceptor" evidence="2">
    <location>
        <position position="442"/>
    </location>
</feature>
<feature type="glycosylation site" description="N-linked (GlcNAc...) asparagine" evidence="4">
    <location>
        <position position="103"/>
    </location>
</feature>
<feature type="glycosylation site" description="N-linked (GlcNAc...) asparagine" evidence="4">
    <location>
        <position position="128"/>
    </location>
</feature>
<feature type="glycosylation site" description="N-linked (GlcNAc...) asparagine" evidence="4">
    <location>
        <position position="167"/>
    </location>
</feature>
<feature type="glycosylation site" description="N-linked (GlcNAc...) asparagine" evidence="4">
    <location>
        <position position="299"/>
    </location>
</feature>
<feature type="glycosylation site" description="N-linked (GlcNAc...) asparagine" evidence="4">
    <location>
        <position position="369"/>
    </location>
</feature>
<feature type="disulfide bond" evidence="2">
    <location>
        <begin position="117"/>
        <end position="168"/>
    </location>
</feature>
<feature type="disulfide bond" evidence="2">
    <location>
        <begin position="139"/>
        <end position="204"/>
    </location>
</feature>
<feature type="disulfide bond" evidence="2">
    <location>
        <begin position="148"/>
        <end position="444"/>
    </location>
</feature>
<feature type="disulfide bond" evidence="2">
    <location>
        <begin position="360"/>
        <end position="440"/>
    </location>
</feature>
<organism>
    <name type="scientific">Oryza sativa subsp. japonica</name>
    <name type="common">Rice</name>
    <dbReference type="NCBI Taxonomy" id="39947"/>
    <lineage>
        <taxon>Eukaryota</taxon>
        <taxon>Viridiplantae</taxon>
        <taxon>Streptophyta</taxon>
        <taxon>Embryophyta</taxon>
        <taxon>Tracheophyta</taxon>
        <taxon>Spermatophyta</taxon>
        <taxon>Magnoliopsida</taxon>
        <taxon>Liliopsida</taxon>
        <taxon>Poales</taxon>
        <taxon>Poaceae</taxon>
        <taxon>BOP clade</taxon>
        <taxon>Oryzoideae</taxon>
        <taxon>Oryzeae</taxon>
        <taxon>Oryzinae</taxon>
        <taxon>Oryza</taxon>
        <taxon>Oryza sativa</taxon>
    </lineage>
</organism>
<gene>
    <name evidence="8" type="primary">XOAT4</name>
    <name evidence="7" type="synonym">TBL10</name>
    <name evidence="12" type="ordered locus">Os11g0104800</name>
    <name evidence="11" type="ordered locus">LOC_Os11g01370</name>
</gene>
<proteinExistence type="evidence at protein level"/>
<dbReference type="EC" id="2.3.1.-" evidence="6"/>
<dbReference type="EMBL" id="MH037018">
    <property type="protein sequence ID" value="AVR54508.1"/>
    <property type="molecule type" value="mRNA"/>
</dbReference>
<dbReference type="EMBL" id="DP000010">
    <property type="protein sequence ID" value="ABA91060.1"/>
    <property type="status" value="ALT_SEQ"/>
    <property type="molecule type" value="Genomic_DNA"/>
</dbReference>
<dbReference type="EMBL" id="AP008217">
    <property type="protein sequence ID" value="BAF27374.2"/>
    <property type="status" value="ALT_SEQ"/>
    <property type="molecule type" value="Genomic_DNA"/>
</dbReference>
<dbReference type="EMBL" id="AP014967">
    <property type="protein sequence ID" value="BAT12299.1"/>
    <property type="molecule type" value="Genomic_DNA"/>
</dbReference>
<dbReference type="RefSeq" id="XP_015617768.1">
    <property type="nucleotide sequence ID" value="XM_015762282.1"/>
</dbReference>
<dbReference type="SMR" id="A0A0P0XXR9"/>
<dbReference type="FunCoup" id="A0A0P0XXR9">
    <property type="interactions" value="5"/>
</dbReference>
<dbReference type="GlyCosmos" id="A0A0P0XXR9">
    <property type="glycosylation" value="5 sites, No reported glycans"/>
</dbReference>
<dbReference type="PaxDb" id="39947-A0A0P0XXR9"/>
<dbReference type="EnsemblPlants" id="Os11t0104800-01">
    <property type="protein sequence ID" value="Os11t0104800-01"/>
    <property type="gene ID" value="Os11g0104800"/>
</dbReference>
<dbReference type="Gramene" id="Os11t0104800-01">
    <property type="protein sequence ID" value="Os11t0104800-01"/>
    <property type="gene ID" value="Os11g0104800"/>
</dbReference>
<dbReference type="KEGG" id="dosa:Os11g0104800"/>
<dbReference type="eggNOG" id="ENOG502SJAQ">
    <property type="taxonomic scope" value="Eukaryota"/>
</dbReference>
<dbReference type="InParanoid" id="A0A0P0XXR9"/>
<dbReference type="OMA" id="HISPHNW"/>
<dbReference type="OrthoDB" id="1932925at2759"/>
<dbReference type="Proteomes" id="UP000000763">
    <property type="component" value="Chromosome 11"/>
</dbReference>
<dbReference type="Proteomes" id="UP000059680">
    <property type="component" value="Chromosome 11"/>
</dbReference>
<dbReference type="GO" id="GO:0005794">
    <property type="term" value="C:Golgi apparatus"/>
    <property type="evidence" value="ECO:0000318"/>
    <property type="project" value="GO_Central"/>
</dbReference>
<dbReference type="GO" id="GO:0000139">
    <property type="term" value="C:Golgi membrane"/>
    <property type="evidence" value="ECO:0000250"/>
    <property type="project" value="UniProtKB"/>
</dbReference>
<dbReference type="GO" id="GO:0016413">
    <property type="term" value="F:O-acetyltransferase activity"/>
    <property type="evidence" value="ECO:0000318"/>
    <property type="project" value="GO_Central"/>
</dbReference>
<dbReference type="GO" id="GO:1990538">
    <property type="term" value="F:xylan O-acetyltransferase activity"/>
    <property type="evidence" value="ECO:0000314"/>
    <property type="project" value="UniProtKB"/>
</dbReference>
<dbReference type="GO" id="GO:1990937">
    <property type="term" value="P:xylan acetylation"/>
    <property type="evidence" value="ECO:0000314"/>
    <property type="project" value="UniProtKB"/>
</dbReference>
<dbReference type="InterPro" id="IPR029962">
    <property type="entry name" value="TBL"/>
</dbReference>
<dbReference type="InterPro" id="IPR026057">
    <property type="entry name" value="TBL_C"/>
</dbReference>
<dbReference type="InterPro" id="IPR025846">
    <property type="entry name" value="TBL_N"/>
</dbReference>
<dbReference type="PANTHER" id="PTHR32285">
    <property type="entry name" value="PROTEIN TRICHOME BIREFRINGENCE-LIKE 9-RELATED"/>
    <property type="match status" value="1"/>
</dbReference>
<dbReference type="PANTHER" id="PTHR32285:SF285">
    <property type="entry name" value="XYLAN O-ACETYLTRANSFERASE 3"/>
    <property type="match status" value="1"/>
</dbReference>
<dbReference type="Pfam" id="PF13839">
    <property type="entry name" value="PC-Esterase"/>
    <property type="match status" value="1"/>
</dbReference>
<dbReference type="Pfam" id="PF14416">
    <property type="entry name" value="PMR5N"/>
    <property type="match status" value="1"/>
</dbReference>
<protein>
    <recommendedName>
        <fullName evidence="8">Xylan O-acetyltransferase 4</fullName>
        <ecNumber evidence="6">2.3.1.-</ecNumber>
    </recommendedName>
    <alternativeName>
        <fullName evidence="7">Protein trichome birefringence-like 10</fullName>
        <shortName evidence="7">OsTBL10</shortName>
    </alternativeName>
</protein>
<accession>A0A0P0XXR9</accession>
<accession>Q0IV91</accession>
<accession>Q2RBN8</accession>
<reference key="1">
    <citation type="journal article" date="2018" name="Planta">
        <title>Biochemical characterization of rice xylan O-acetyltransferases.</title>
        <authorList>
            <person name="Zhong R."/>
            <person name="Cui D."/>
            <person name="Dasher R.L."/>
            <person name="Ye Z.H."/>
        </authorList>
    </citation>
    <scope>NUCLEOTIDE SEQUENCE [MRNA]</scope>
    <scope>FUNCTION</scope>
    <scope>CATALYTIC ACTIVITY</scope>
    <scope>BIOPHYSICOCHEMICAL PROPERTIES</scope>
    <scope>TISSUE SPECIFICITY</scope>
</reference>
<reference key="2">
    <citation type="journal article" date="2005" name="BMC Biol.">
        <title>The sequence of rice chromosomes 11 and 12, rich in disease resistance genes and recent gene duplications.</title>
        <authorList>
            <consortium name="The rice chromosomes 11 and 12 sequencing consortia"/>
        </authorList>
    </citation>
    <scope>NUCLEOTIDE SEQUENCE [LARGE SCALE GENOMIC DNA]</scope>
    <source>
        <strain>cv. Nipponbare</strain>
    </source>
</reference>
<reference key="3">
    <citation type="journal article" date="2005" name="Nature">
        <title>The map-based sequence of the rice genome.</title>
        <authorList>
            <consortium name="International rice genome sequencing project (IRGSP)"/>
        </authorList>
    </citation>
    <scope>NUCLEOTIDE SEQUENCE [LARGE SCALE GENOMIC DNA]</scope>
    <source>
        <strain>cv. Nipponbare</strain>
    </source>
</reference>
<reference key="4">
    <citation type="journal article" date="2008" name="Nucleic Acids Res.">
        <title>The rice annotation project database (RAP-DB): 2008 update.</title>
        <authorList>
            <consortium name="The rice annotation project (RAP)"/>
        </authorList>
    </citation>
    <scope>GENOME REANNOTATION</scope>
    <source>
        <strain>cv. Nipponbare</strain>
    </source>
</reference>
<reference key="5">
    <citation type="journal article" date="2013" name="Rice">
        <title>Improvement of the Oryza sativa Nipponbare reference genome using next generation sequence and optical map data.</title>
        <authorList>
            <person name="Kawahara Y."/>
            <person name="de la Bastide M."/>
            <person name="Hamilton J.P."/>
            <person name="Kanamori H."/>
            <person name="McCombie W.R."/>
            <person name="Ouyang S."/>
            <person name="Schwartz D.C."/>
            <person name="Tanaka T."/>
            <person name="Wu J."/>
            <person name="Zhou S."/>
            <person name="Childs K.L."/>
            <person name="Davidson R.M."/>
            <person name="Lin H."/>
            <person name="Quesada-Ocampo L."/>
            <person name="Vaillancourt B."/>
            <person name="Sakai H."/>
            <person name="Lee S.S."/>
            <person name="Kim J."/>
            <person name="Numa H."/>
            <person name="Itoh T."/>
            <person name="Buell C.R."/>
            <person name="Matsumoto T."/>
        </authorList>
    </citation>
    <scope>GENOME REANNOTATION</scope>
    <source>
        <strain>cv. Nipponbare</strain>
    </source>
</reference>
<reference key="6">
    <citation type="journal article" date="2017" name="Plant Physiol.">
        <title>Two trichome birefringence-like proteins mediate xylan acetylation, which is essential for leaf blight resistance in rice.</title>
        <authorList>
            <person name="Gao Y."/>
            <person name="He C."/>
            <person name="Zhang D."/>
            <person name="Liu X."/>
            <person name="Xu Z."/>
            <person name="Tian Y."/>
            <person name="Liu X.H."/>
            <person name="Zang S."/>
            <person name="Pauly M."/>
            <person name="Zhou Y."/>
            <person name="Zhang B."/>
        </authorList>
    </citation>
    <scope>GENE FAMILY</scope>
    <scope>NOMENCLATURE</scope>
</reference>
<evidence type="ECO:0000250" key="1">
    <source>
        <dbReference type="UniProtKB" id="Q2QYU2"/>
    </source>
</evidence>
<evidence type="ECO:0000250" key="2">
    <source>
        <dbReference type="UniProtKB" id="Q9LY46"/>
    </source>
</evidence>
<evidence type="ECO:0000255" key="3"/>
<evidence type="ECO:0000255" key="4">
    <source>
        <dbReference type="PROSITE-ProRule" id="PRU00498"/>
    </source>
</evidence>
<evidence type="ECO:0000256" key="5">
    <source>
        <dbReference type="SAM" id="MobiDB-lite"/>
    </source>
</evidence>
<evidence type="ECO:0000269" key="6">
    <source>
    </source>
</evidence>
<evidence type="ECO:0000303" key="7">
    <source>
    </source>
</evidence>
<evidence type="ECO:0000303" key="8">
    <source>
    </source>
</evidence>
<evidence type="ECO:0000305" key="9"/>
<evidence type="ECO:0000305" key="10">
    <source>
    </source>
</evidence>
<evidence type="ECO:0000312" key="11">
    <source>
        <dbReference type="EMBL" id="ABA91060.1"/>
    </source>
</evidence>
<evidence type="ECO:0000312" key="12">
    <source>
        <dbReference type="EMBL" id="BAT12299.1"/>
    </source>
</evidence>
<keyword id="KW-1015">Disulfide bond</keyword>
<keyword id="KW-0325">Glycoprotein</keyword>
<keyword id="KW-0333">Golgi apparatus</keyword>
<keyword id="KW-0472">Membrane</keyword>
<keyword id="KW-1185">Reference proteome</keyword>
<keyword id="KW-0735">Signal-anchor</keyword>
<keyword id="KW-0808">Transferase</keyword>
<keyword id="KW-0812">Transmembrane</keyword>
<keyword id="KW-1133">Transmembrane helix</keyword>
<name>XOAT4_ORYSJ</name>
<sequence>MTKPQQQSPPSTTATTTTSPPPPPPSTPPPASSSSSSLAKLPLRLHSLASSSRSLLSALRRSPVTTLVAAFFLLALFMYGEDVRTLAELSIDDYLYPDADFYNVSALPPLLLPPPTCDLSRGRWVFDNTSLPAYREKECTFLTKQVSCLANGRPDDLWQYWRWQPNNCSLPTFDARRFMEKMRGKRMMFVGDSLNRNQWESLVCLVQPILSKGRKKIVKRGSFNIFYAKEYRATLEFYWAPFLVESNSDNPNFHHIDQRIISPERIESHANNWKDVDYLIFNTYIWWMNNEDIKVRRPNSTSWSDHDEVPRIETYGRVFKTWSTWLEQNVDPARTSVFFMTISPLHNSPAQWGNPNGIKCVKETLPVLNYTKPLDLNHDMRMYDLVAKVAKNMKNVPVSLIDITRMSDYRKDAHTSLYSIRQGKLLTPEQKADPQKYADCIHWCLPGVPDVWNQILYTRILSKSSPPSPHPPLPPQ</sequence>
<comment type="function">
    <text evidence="2 6">Xylan acetyltransferase required for 2-O- and 3-O-monoacetylation of xylosyl residues in xylan (PubMed:29569182). Catalyzes the 2-O-acetylation of xylan, followed by nonenzymatic acetyl migration to the O-3 position, resulting in products that are monoacetylated at both O-2 and O-3 positions (By similarity).</text>
</comment>
<comment type="biophysicochemical properties">
    <kinetics>
        <KM evidence="6">1.63 mM for xylohexaose</KM>
        <Vmax evidence="6">79.3 pmol/min/mg enzyme with xylohexaose as substrate</Vmax>
    </kinetics>
</comment>
<comment type="subcellular location">
    <subcellularLocation>
        <location evidence="1">Golgi apparatus membrane</location>
        <topology evidence="3">Single-pass type II membrane protein</topology>
    </subcellularLocation>
</comment>
<comment type="tissue specificity">
    <text evidence="6">Highly expressed in leaves. Expressed in roots, stems and inflorescences.</text>
</comment>
<comment type="similarity">
    <text evidence="9">Belongs to the PC-esterase family. TBL subfamily.</text>
</comment>
<comment type="sequence caution" evidence="9">
    <conflict type="erroneous gene model prediction">
        <sequence resource="EMBL-CDS" id="ABA91060"/>
    </conflict>
</comment>
<comment type="sequence caution" evidence="9">
    <conflict type="erroneous gene model prediction">
        <sequence resource="EMBL-CDS" id="BAF27374"/>
    </conflict>
</comment>